<protein>
    <recommendedName>
        <fullName>Regulatory protein RecX</fullName>
    </recommendedName>
</protein>
<feature type="chain" id="PRO_0000162422" description="Regulatory protein RecX">
    <location>
        <begin position="1"/>
        <end position="214"/>
    </location>
</feature>
<sequence length="214" mass="25501">MEENTITKIEAQKKKKDRVNVYIDNEYSFSCNTELIYIHGLKKGKVVDLDYLQDIIEEDNYLYAKSRALSFIEKTFKTEKEIRVKLREKEFNEKIIERVIEFLRKYDFVDDSRYAELYIKERINKQGKVKIKYGLIKKGINDSIIDEKLSKYSANNENYIEAMREVALKKFNNIAKRETDKLKIKRKLSSYLLGRGYSWSEIGEVLKEIFSENN</sequence>
<accession>Q97GF7</accession>
<proteinExistence type="inferred from homology"/>
<evidence type="ECO:0000250" key="1"/>
<evidence type="ECO:0000305" key="2"/>
<reference key="1">
    <citation type="journal article" date="2001" name="J. Bacteriol.">
        <title>Genome sequence and comparative analysis of the solvent-producing bacterium Clostridium acetobutylicum.</title>
        <authorList>
            <person name="Noelling J."/>
            <person name="Breton G."/>
            <person name="Omelchenko M.V."/>
            <person name="Makarova K.S."/>
            <person name="Zeng Q."/>
            <person name="Gibson R."/>
            <person name="Lee H.M."/>
            <person name="Dubois J."/>
            <person name="Qiu D."/>
            <person name="Hitti J."/>
            <person name="Wolf Y.I."/>
            <person name="Tatusov R.L."/>
            <person name="Sabathe F."/>
            <person name="Doucette-Stamm L.A."/>
            <person name="Soucaille P."/>
            <person name="Daly M.J."/>
            <person name="Bennett G.N."/>
            <person name="Koonin E.V."/>
            <person name="Smith D.R."/>
        </authorList>
    </citation>
    <scope>NUCLEOTIDE SEQUENCE [LARGE SCALE GENOMIC DNA]</scope>
    <source>
        <strain>ATCC 824 / DSM 792 / JCM 1419 / IAM 19013 / LMG 5710 / NBRC 13948 / NRRL B-527 / VKM B-1787 / 2291 / W</strain>
    </source>
</reference>
<name>RECX_CLOAB</name>
<dbReference type="EMBL" id="AE001437">
    <property type="protein sequence ID" value="AAK80365.1"/>
    <property type="molecule type" value="Genomic_DNA"/>
</dbReference>
<dbReference type="PIR" id="B97197">
    <property type="entry name" value="B97197"/>
</dbReference>
<dbReference type="RefSeq" id="NP_349025.1">
    <property type="nucleotide sequence ID" value="NC_003030.1"/>
</dbReference>
<dbReference type="RefSeq" id="WP_010965706.1">
    <property type="nucleotide sequence ID" value="NC_003030.1"/>
</dbReference>
<dbReference type="SMR" id="Q97GF7"/>
<dbReference type="STRING" id="272562.CA_C2410"/>
<dbReference type="GeneID" id="44998890"/>
<dbReference type="KEGG" id="cac:CA_C2410"/>
<dbReference type="PATRIC" id="fig|272562.8.peg.2607"/>
<dbReference type="eggNOG" id="COG2137">
    <property type="taxonomic scope" value="Bacteria"/>
</dbReference>
<dbReference type="HOGENOM" id="CLU_066607_4_1_9"/>
<dbReference type="OrthoDB" id="5421057at2"/>
<dbReference type="Proteomes" id="UP000000814">
    <property type="component" value="Chromosome"/>
</dbReference>
<dbReference type="GO" id="GO:0005737">
    <property type="term" value="C:cytoplasm"/>
    <property type="evidence" value="ECO:0007669"/>
    <property type="project" value="UniProtKB-SubCell"/>
</dbReference>
<dbReference type="GO" id="GO:0006282">
    <property type="term" value="P:regulation of DNA repair"/>
    <property type="evidence" value="ECO:0007669"/>
    <property type="project" value="UniProtKB-UniRule"/>
</dbReference>
<dbReference type="Gene3D" id="1.10.10.10">
    <property type="entry name" value="Winged helix-like DNA-binding domain superfamily/Winged helix DNA-binding domain"/>
    <property type="match status" value="3"/>
</dbReference>
<dbReference type="HAMAP" id="MF_01114">
    <property type="entry name" value="RecX"/>
    <property type="match status" value="1"/>
</dbReference>
<dbReference type="InterPro" id="IPR053926">
    <property type="entry name" value="RecX_HTH_1st"/>
</dbReference>
<dbReference type="InterPro" id="IPR053924">
    <property type="entry name" value="RecX_HTH_2nd"/>
</dbReference>
<dbReference type="InterPro" id="IPR053925">
    <property type="entry name" value="RecX_HTH_3rd"/>
</dbReference>
<dbReference type="InterPro" id="IPR003783">
    <property type="entry name" value="Regulatory_RecX"/>
</dbReference>
<dbReference type="InterPro" id="IPR036388">
    <property type="entry name" value="WH-like_DNA-bd_sf"/>
</dbReference>
<dbReference type="NCBIfam" id="NF001058">
    <property type="entry name" value="PRK00117.4-1"/>
    <property type="match status" value="1"/>
</dbReference>
<dbReference type="PANTHER" id="PTHR33602">
    <property type="entry name" value="REGULATORY PROTEIN RECX FAMILY PROTEIN"/>
    <property type="match status" value="1"/>
</dbReference>
<dbReference type="PANTHER" id="PTHR33602:SF1">
    <property type="entry name" value="REGULATORY PROTEIN RECX FAMILY PROTEIN"/>
    <property type="match status" value="1"/>
</dbReference>
<dbReference type="Pfam" id="PF21982">
    <property type="entry name" value="RecX_HTH1"/>
    <property type="match status" value="1"/>
</dbReference>
<dbReference type="Pfam" id="PF02631">
    <property type="entry name" value="RecX_HTH2"/>
    <property type="match status" value="1"/>
</dbReference>
<dbReference type="Pfam" id="PF21981">
    <property type="entry name" value="RecX_HTH3"/>
    <property type="match status" value="1"/>
</dbReference>
<organism>
    <name type="scientific">Clostridium acetobutylicum (strain ATCC 824 / DSM 792 / JCM 1419 / IAM 19013 / LMG 5710 / NBRC 13948 / NRRL B-527 / VKM B-1787 / 2291 / W)</name>
    <dbReference type="NCBI Taxonomy" id="272562"/>
    <lineage>
        <taxon>Bacteria</taxon>
        <taxon>Bacillati</taxon>
        <taxon>Bacillota</taxon>
        <taxon>Clostridia</taxon>
        <taxon>Eubacteriales</taxon>
        <taxon>Clostridiaceae</taxon>
        <taxon>Clostridium</taxon>
    </lineage>
</organism>
<comment type="function">
    <text evidence="1">Modulates RecA activity.</text>
</comment>
<comment type="subcellular location">
    <subcellularLocation>
        <location evidence="2">Cytoplasm</location>
    </subcellularLocation>
</comment>
<comment type="similarity">
    <text evidence="2">Belongs to the RecX family.</text>
</comment>
<keyword id="KW-0963">Cytoplasm</keyword>
<keyword id="KW-1185">Reference proteome</keyword>
<gene>
    <name type="primary">recX</name>
    <name type="ordered locus">CA_C2410</name>
</gene>